<comment type="function">
    <text evidence="1">Transcriptional activator.</text>
</comment>
<comment type="subunit">
    <text evidence="1">Binds DNA as a dimer.</text>
</comment>
<comment type="subcellular location">
    <subcellularLocation>
        <location evidence="1">Endoplasmic reticulum membrane</location>
        <topology evidence="1">Single-pass type II membrane protein</topology>
    </subcellularLocation>
</comment>
<comment type="subcellular location">
    <molecule>Processed cyclic AMP-responsive element-binding protein 3-like protein 4</molecule>
    <subcellularLocation>
        <location evidence="3">Nucleus</location>
    </subcellularLocation>
    <text evidence="1">The cleaved N-terminal cytoplasmic domain translocates into the nucleus.</text>
</comment>
<comment type="PTM">
    <text evidence="1">Controlled by regulated intramembrane proteolysis (RIP). A fragment containing the cytoplasmic transcription factor domain is released by proteolysis. The cleavage seems to be performed sequentially by site-1 and site-2 proteases (PS1 and PS2) (By similarity).</text>
</comment>
<comment type="similarity">
    <text evidence="5">Belongs to the bZIP family. ATF subfamily.</text>
</comment>
<keyword id="KW-0010">Activator</keyword>
<keyword id="KW-0238">DNA-binding</keyword>
<keyword id="KW-0256">Endoplasmic reticulum</keyword>
<keyword id="KW-0325">Glycoprotein</keyword>
<keyword id="KW-0472">Membrane</keyword>
<keyword id="KW-0539">Nucleus</keyword>
<keyword id="KW-1185">Reference proteome</keyword>
<keyword id="KW-0735">Signal-anchor</keyword>
<keyword id="KW-0804">Transcription</keyword>
<keyword id="KW-0805">Transcription regulation</keyword>
<keyword id="KW-0812">Transmembrane</keyword>
<keyword id="KW-1133">Transmembrane helix</keyword>
<proteinExistence type="evidence at transcript level"/>
<accession>Q08CW8</accession>
<reference key="1">
    <citation type="submission" date="2006-09" db="EMBL/GenBank/DDBJ databases">
        <authorList>
            <consortium name="NIH - Xenopus Gene Collection (XGC) project"/>
        </authorList>
    </citation>
    <scope>NUCLEOTIDE SEQUENCE [LARGE SCALE MRNA]</scope>
    <source>
        <strain>N6</strain>
        <tissue>Oviduct</tissue>
    </source>
</reference>
<organism>
    <name type="scientific">Xenopus tropicalis</name>
    <name type="common">Western clawed frog</name>
    <name type="synonym">Silurana tropicalis</name>
    <dbReference type="NCBI Taxonomy" id="8364"/>
    <lineage>
        <taxon>Eukaryota</taxon>
        <taxon>Metazoa</taxon>
        <taxon>Chordata</taxon>
        <taxon>Craniata</taxon>
        <taxon>Vertebrata</taxon>
        <taxon>Euteleostomi</taxon>
        <taxon>Amphibia</taxon>
        <taxon>Batrachia</taxon>
        <taxon>Anura</taxon>
        <taxon>Pipoidea</taxon>
        <taxon>Pipidae</taxon>
        <taxon>Xenopodinae</taxon>
        <taxon>Xenopus</taxon>
        <taxon>Silurana</taxon>
    </lineage>
</organism>
<dbReference type="EMBL" id="BC124053">
    <property type="protein sequence ID" value="AAI24054.1"/>
    <property type="molecule type" value="mRNA"/>
</dbReference>
<dbReference type="RefSeq" id="NP_001072707.2">
    <property type="nucleotide sequence ID" value="NM_001079239.1"/>
</dbReference>
<dbReference type="SMR" id="Q08CW8"/>
<dbReference type="FunCoup" id="Q08CW8">
    <property type="interactions" value="1388"/>
</dbReference>
<dbReference type="STRING" id="8364.ENSXETP00000021974"/>
<dbReference type="GlyCosmos" id="Q08CW8">
    <property type="glycosylation" value="1 site, No reported glycans"/>
</dbReference>
<dbReference type="PaxDb" id="8364-ENSXETP00000063665"/>
<dbReference type="DNASU" id="780164"/>
<dbReference type="GeneID" id="780164"/>
<dbReference type="KEGG" id="xtr:780164"/>
<dbReference type="CTD" id="148327"/>
<dbReference type="eggNOG" id="KOG0709">
    <property type="taxonomic scope" value="Eukaryota"/>
</dbReference>
<dbReference type="HOGENOM" id="CLU_047257_2_0_1"/>
<dbReference type="InParanoid" id="Q08CW8"/>
<dbReference type="OrthoDB" id="674948at2759"/>
<dbReference type="Proteomes" id="UP000008143">
    <property type="component" value="Chromosome 8"/>
</dbReference>
<dbReference type="GO" id="GO:0005789">
    <property type="term" value="C:endoplasmic reticulum membrane"/>
    <property type="evidence" value="ECO:0007669"/>
    <property type="project" value="UniProtKB-SubCell"/>
</dbReference>
<dbReference type="GO" id="GO:0005634">
    <property type="term" value="C:nucleus"/>
    <property type="evidence" value="ECO:0007669"/>
    <property type="project" value="UniProtKB-SubCell"/>
</dbReference>
<dbReference type="GO" id="GO:0003677">
    <property type="term" value="F:DNA binding"/>
    <property type="evidence" value="ECO:0007669"/>
    <property type="project" value="UniProtKB-KW"/>
</dbReference>
<dbReference type="GO" id="GO:0003700">
    <property type="term" value="F:DNA-binding transcription factor activity"/>
    <property type="evidence" value="ECO:0007669"/>
    <property type="project" value="InterPro"/>
</dbReference>
<dbReference type="CDD" id="cd14689">
    <property type="entry name" value="bZIP_CREB3"/>
    <property type="match status" value="1"/>
</dbReference>
<dbReference type="FunFam" id="1.20.5.170:FF:000042">
    <property type="entry name" value="Cyclic AMP-responsive element-binding protein 3-like protein 3"/>
    <property type="match status" value="1"/>
</dbReference>
<dbReference type="Gene3D" id="1.20.5.170">
    <property type="match status" value="1"/>
</dbReference>
<dbReference type="InterPro" id="IPR004827">
    <property type="entry name" value="bZIP"/>
</dbReference>
<dbReference type="InterPro" id="IPR046347">
    <property type="entry name" value="bZIP_sf"/>
</dbReference>
<dbReference type="InterPro" id="IPR051381">
    <property type="entry name" value="CREB_ATF_subfamily"/>
</dbReference>
<dbReference type="PANTHER" id="PTHR45996">
    <property type="entry name" value="AGAP001464-PB"/>
    <property type="match status" value="1"/>
</dbReference>
<dbReference type="PANTHER" id="PTHR45996:SF2">
    <property type="entry name" value="CYCLIC AMP-RESPONSIVE ELEMENT-BINDING PROTEIN 3-LIKE PROTEIN 4"/>
    <property type="match status" value="1"/>
</dbReference>
<dbReference type="Pfam" id="PF00170">
    <property type="entry name" value="bZIP_1"/>
    <property type="match status" value="1"/>
</dbReference>
<dbReference type="SMART" id="SM00338">
    <property type="entry name" value="BRLZ"/>
    <property type="match status" value="1"/>
</dbReference>
<dbReference type="SUPFAM" id="SSF57959">
    <property type="entry name" value="Leucine zipper domain"/>
    <property type="match status" value="1"/>
</dbReference>
<dbReference type="PROSITE" id="PS50217">
    <property type="entry name" value="BZIP"/>
    <property type="match status" value="1"/>
</dbReference>
<gene>
    <name type="primary">creb3l4</name>
</gene>
<feature type="chain" id="PRO_0000288083" description="Cyclic AMP-responsive element-binding protein 3-like protein 4">
    <location>
        <begin position="1"/>
        <end position="428"/>
    </location>
</feature>
<feature type="chain" id="PRO_0000296223" description="Processed cyclic AMP-responsive element-binding protein 3-like protein 4">
    <location>
        <begin position="1"/>
        <end status="unknown"/>
    </location>
</feature>
<feature type="topological domain" description="Cytoplasmic" evidence="2">
    <location>
        <begin position="1"/>
        <end position="294"/>
    </location>
</feature>
<feature type="transmembrane region" description="Helical; Signal-anchor for type II membrane protein" evidence="2">
    <location>
        <begin position="295"/>
        <end position="315"/>
    </location>
</feature>
<feature type="topological domain" description="Lumenal" evidence="2">
    <location>
        <begin position="316"/>
        <end position="428"/>
    </location>
</feature>
<feature type="domain" description="bZIP" evidence="3">
    <location>
        <begin position="216"/>
        <end position="279"/>
    </location>
</feature>
<feature type="region of interest" description="Required for transcriptional activation" evidence="1">
    <location>
        <begin position="1"/>
        <end position="68"/>
    </location>
</feature>
<feature type="region of interest" description="Disordered" evidence="4">
    <location>
        <begin position="71"/>
        <end position="111"/>
    </location>
</feature>
<feature type="region of interest" description="Basic motif" evidence="3">
    <location>
        <begin position="218"/>
        <end position="247"/>
    </location>
</feature>
<feature type="region of interest" description="Leucine-zipper" evidence="3">
    <location>
        <begin position="258"/>
        <end position="279"/>
    </location>
</feature>
<feature type="region of interest" description="Disordered" evidence="4">
    <location>
        <begin position="339"/>
        <end position="428"/>
    </location>
</feature>
<feature type="compositionally biased region" description="Basic and acidic residues" evidence="4">
    <location>
        <begin position="354"/>
        <end position="368"/>
    </location>
</feature>
<feature type="site" description="Cleavage; by PS1" evidence="1">
    <location>
        <begin position="338"/>
        <end position="339"/>
    </location>
</feature>
<feature type="glycosylation site" description="N-linked (GlcNAc...) asparagine" evidence="2">
    <location>
        <position position="418"/>
    </location>
</feature>
<name>CR3L4_XENTR</name>
<evidence type="ECO:0000250" key="1"/>
<evidence type="ECO:0000255" key="2"/>
<evidence type="ECO:0000255" key="3">
    <source>
        <dbReference type="PROSITE-ProRule" id="PRU00978"/>
    </source>
</evidence>
<evidence type="ECO:0000256" key="4">
    <source>
        <dbReference type="SAM" id="MobiDB-lite"/>
    </source>
</evidence>
<evidence type="ECO:0000305" key="5"/>
<sequence>MLLGSLFEQTEELFHSEGFPGPDHSNFPLSELQFPAEKLYEDWPVRGPMGLSEREDTDEFLQMMINPNEVYSTGPAAAESPESDSGFSDDPRPDTPPQSETSPPLPQPTPVYELVYDIGSLEERKSQSDMSSVISIQLAEDWNSAPLLIPESCIVNDLPPVCKSTPLPIRLTPADLIAVDALYPELHLTEEEKRLLSQEGVALPNNLPLTKAEERILKKVRRKIRNKQSAQDSRRRKKEYIDGLESRVAACSSQNQELHKKVVELEKHNISLITQLRKLQTLIKQTSNKAAQTSTCVLILLFSLALLVFPSYSPFRSRPSASQEDSYRPTGVISRNILNKGGFSEVADPQASDTLHRAQQREEGDPGRHVVPPANPNPEETEPVSNRARTTPEPDEQVLAEPEAAILGQKGEPPGSDNLSKTARADEM</sequence>
<protein>
    <recommendedName>
        <fullName>Cyclic AMP-responsive element-binding protein 3-like protein 4</fullName>
        <shortName>cAMP-responsive element-binding protein 3-like protein 4</shortName>
    </recommendedName>
    <component>
        <recommendedName>
            <fullName>Processed cyclic AMP-responsive element-binding protein 3-like protein 4</fullName>
        </recommendedName>
    </component>
</protein>